<dbReference type="EC" id="2.7.11.-" evidence="1"/>
<dbReference type="EC" id="2.7.4.-" evidence="1"/>
<dbReference type="EMBL" id="AE009442">
    <property type="protein sequence ID" value="AAO28506.1"/>
    <property type="molecule type" value="Genomic_DNA"/>
</dbReference>
<dbReference type="RefSeq" id="WP_004083779.1">
    <property type="nucleotide sequence ID" value="NC_004556.1"/>
</dbReference>
<dbReference type="SMR" id="Q87DP7"/>
<dbReference type="KEGG" id="xft:PD_0635"/>
<dbReference type="HOGENOM" id="CLU_052030_0_2_6"/>
<dbReference type="Proteomes" id="UP000002516">
    <property type="component" value="Chromosome"/>
</dbReference>
<dbReference type="GO" id="GO:0005524">
    <property type="term" value="F:ATP binding"/>
    <property type="evidence" value="ECO:0007669"/>
    <property type="project" value="UniProtKB-UniRule"/>
</dbReference>
<dbReference type="GO" id="GO:0000287">
    <property type="term" value="F:magnesium ion binding"/>
    <property type="evidence" value="ECO:0007669"/>
    <property type="project" value="UniProtKB-UniRule"/>
</dbReference>
<dbReference type="GO" id="GO:0000155">
    <property type="term" value="F:phosphorelay sensor kinase activity"/>
    <property type="evidence" value="ECO:0007669"/>
    <property type="project" value="InterPro"/>
</dbReference>
<dbReference type="GO" id="GO:0004674">
    <property type="term" value="F:protein serine/threonine kinase activity"/>
    <property type="evidence" value="ECO:0007669"/>
    <property type="project" value="UniProtKB-KW"/>
</dbReference>
<dbReference type="GO" id="GO:0004712">
    <property type="term" value="F:protein serine/threonine/tyrosine kinase activity"/>
    <property type="evidence" value="ECO:0007669"/>
    <property type="project" value="UniProtKB-UniRule"/>
</dbReference>
<dbReference type="GO" id="GO:0006109">
    <property type="term" value="P:regulation of carbohydrate metabolic process"/>
    <property type="evidence" value="ECO:0007669"/>
    <property type="project" value="UniProtKB-UniRule"/>
</dbReference>
<dbReference type="CDD" id="cd01918">
    <property type="entry name" value="HprK_C"/>
    <property type="match status" value="1"/>
</dbReference>
<dbReference type="FunFam" id="3.40.50.300:FF:000174">
    <property type="entry name" value="HPr kinase/phosphorylase"/>
    <property type="match status" value="1"/>
</dbReference>
<dbReference type="Gene3D" id="3.40.1390.20">
    <property type="entry name" value="HprK N-terminal domain-like"/>
    <property type="match status" value="1"/>
</dbReference>
<dbReference type="Gene3D" id="3.40.50.300">
    <property type="entry name" value="P-loop containing nucleotide triphosphate hydrolases"/>
    <property type="match status" value="1"/>
</dbReference>
<dbReference type="HAMAP" id="MF_01249">
    <property type="entry name" value="HPr_kinase"/>
    <property type="match status" value="1"/>
</dbReference>
<dbReference type="InterPro" id="IPR003755">
    <property type="entry name" value="HPr(Ser)_kin/Pase"/>
</dbReference>
<dbReference type="InterPro" id="IPR011104">
    <property type="entry name" value="Hpr_kin/Pase_C"/>
</dbReference>
<dbReference type="InterPro" id="IPR011126">
    <property type="entry name" value="Hpr_kin/Pase_Hpr_N"/>
</dbReference>
<dbReference type="InterPro" id="IPR027417">
    <property type="entry name" value="P-loop_NTPase"/>
</dbReference>
<dbReference type="InterPro" id="IPR028979">
    <property type="entry name" value="Ser_kin/Pase_Hpr-like_N_sf"/>
</dbReference>
<dbReference type="NCBIfam" id="TIGR00679">
    <property type="entry name" value="hpr-ser"/>
    <property type="match status" value="1"/>
</dbReference>
<dbReference type="PANTHER" id="PTHR30305:SF1">
    <property type="entry name" value="HPR KINASE_PHOSPHORYLASE"/>
    <property type="match status" value="1"/>
</dbReference>
<dbReference type="PANTHER" id="PTHR30305">
    <property type="entry name" value="PROTEIN YJDM-RELATED"/>
    <property type="match status" value="1"/>
</dbReference>
<dbReference type="Pfam" id="PF07475">
    <property type="entry name" value="Hpr_kinase_C"/>
    <property type="match status" value="1"/>
</dbReference>
<dbReference type="Pfam" id="PF02603">
    <property type="entry name" value="Hpr_kinase_N"/>
    <property type="match status" value="1"/>
</dbReference>
<dbReference type="SUPFAM" id="SSF75138">
    <property type="entry name" value="HprK N-terminal domain-like"/>
    <property type="match status" value="1"/>
</dbReference>
<dbReference type="SUPFAM" id="SSF53795">
    <property type="entry name" value="PEP carboxykinase-like"/>
    <property type="match status" value="1"/>
</dbReference>
<evidence type="ECO:0000255" key="1">
    <source>
        <dbReference type="HAMAP-Rule" id="MF_01249"/>
    </source>
</evidence>
<proteinExistence type="inferred from homology"/>
<accession>Q87DP7</accession>
<keyword id="KW-0067">ATP-binding</keyword>
<keyword id="KW-0418">Kinase</keyword>
<keyword id="KW-0460">Magnesium</keyword>
<keyword id="KW-0479">Metal-binding</keyword>
<keyword id="KW-0511">Multifunctional enzyme</keyword>
<keyword id="KW-0547">Nucleotide-binding</keyword>
<keyword id="KW-1185">Reference proteome</keyword>
<keyword id="KW-0723">Serine/threonine-protein kinase</keyword>
<keyword id="KW-0808">Transferase</keyword>
<name>HPRK_XYLFT</name>
<organism>
    <name type="scientific">Xylella fastidiosa (strain Temecula1 / ATCC 700964)</name>
    <dbReference type="NCBI Taxonomy" id="183190"/>
    <lineage>
        <taxon>Bacteria</taxon>
        <taxon>Pseudomonadati</taxon>
        <taxon>Pseudomonadota</taxon>
        <taxon>Gammaproteobacteria</taxon>
        <taxon>Lysobacterales</taxon>
        <taxon>Lysobacteraceae</taxon>
        <taxon>Xylella</taxon>
    </lineage>
</organism>
<sequence>MNTSITARELFDLQRDRLSLRWIAGQQGEHRQIDSGDTRARRPSLAGYLNTIYPNKVQILGTEELTWLDSLEPNKRKETIEKIIQFQPLTLVISKNQSCPEDMRTAADNSQIPLWVSPKRGHELLNHLSYHLARILAPRATLHGVFMEIYSIGVLITGEAGSGKSELALELLSRGHRLVADDAPEFTQIAPDVLDGTCPEILQDLLEVRGLGVLNVRHMFGDTAIKKNKYLRLIVHLTKPITEPTPSGYERLTGDSGTRHVLDLDVPLITLPVMPGRNLAVLTEAATRLHILRTKGIDPATMFIARHSNLLERRPP</sequence>
<feature type="chain" id="PRO_0000059009" description="HPr kinase/phosphorylase">
    <location>
        <begin position="1"/>
        <end position="316"/>
    </location>
</feature>
<feature type="region of interest" description="Important for the catalytic mechanism of both phosphorylation and dephosphorylation" evidence="1">
    <location>
        <begin position="206"/>
        <end position="215"/>
    </location>
</feature>
<feature type="region of interest" description="Important for the catalytic mechanism of dephosphorylation" evidence="1">
    <location>
        <begin position="272"/>
        <end position="277"/>
    </location>
</feature>
<feature type="active site" evidence="1">
    <location>
        <position position="143"/>
    </location>
</feature>
<feature type="active site" evidence="1">
    <location>
        <position position="164"/>
    </location>
</feature>
<feature type="active site" description="Proton acceptor; for phosphorylation activity. Proton donor; for dephosphorylation activity" evidence="1">
    <location>
        <position position="182"/>
    </location>
</feature>
<feature type="active site" evidence="1">
    <location>
        <position position="251"/>
    </location>
</feature>
<feature type="binding site" evidence="1">
    <location>
        <begin position="158"/>
        <end position="165"/>
    </location>
    <ligand>
        <name>ATP</name>
        <dbReference type="ChEBI" id="CHEBI:30616"/>
    </ligand>
</feature>
<feature type="binding site" evidence="1">
    <location>
        <position position="165"/>
    </location>
    <ligand>
        <name>Mg(2+)</name>
        <dbReference type="ChEBI" id="CHEBI:18420"/>
    </ligand>
</feature>
<feature type="binding site" evidence="1">
    <location>
        <position position="207"/>
    </location>
    <ligand>
        <name>Mg(2+)</name>
        <dbReference type="ChEBI" id="CHEBI:18420"/>
    </ligand>
</feature>
<comment type="function">
    <text evidence="1">Catalyzes the ATP- as well as the pyrophosphate-dependent phosphorylation of a specific serine residue in HPr, a phosphocarrier protein of the phosphoenolpyruvate-dependent sugar phosphotransferase system (PTS). HprK/P also catalyzes the pyrophosphate-producing, inorganic phosphate-dependent dephosphorylation (phosphorolysis) of seryl-phosphorylated HPr (P-Ser-HPr).</text>
</comment>
<comment type="catalytic activity">
    <reaction evidence="1">
        <text>[HPr protein]-L-serine + ATP = [HPr protein]-O-phospho-L-serine + ADP + H(+)</text>
        <dbReference type="Rhea" id="RHEA:46600"/>
        <dbReference type="Rhea" id="RHEA-COMP:11602"/>
        <dbReference type="Rhea" id="RHEA-COMP:11603"/>
        <dbReference type="ChEBI" id="CHEBI:15378"/>
        <dbReference type="ChEBI" id="CHEBI:29999"/>
        <dbReference type="ChEBI" id="CHEBI:30616"/>
        <dbReference type="ChEBI" id="CHEBI:83421"/>
        <dbReference type="ChEBI" id="CHEBI:456216"/>
    </reaction>
</comment>
<comment type="catalytic activity">
    <reaction evidence="1">
        <text>[HPr protein]-O-phospho-L-serine + phosphate + H(+) = [HPr protein]-L-serine + diphosphate</text>
        <dbReference type="Rhea" id="RHEA:46604"/>
        <dbReference type="Rhea" id="RHEA-COMP:11602"/>
        <dbReference type="Rhea" id="RHEA-COMP:11603"/>
        <dbReference type="ChEBI" id="CHEBI:15378"/>
        <dbReference type="ChEBI" id="CHEBI:29999"/>
        <dbReference type="ChEBI" id="CHEBI:33019"/>
        <dbReference type="ChEBI" id="CHEBI:43474"/>
        <dbReference type="ChEBI" id="CHEBI:83421"/>
    </reaction>
</comment>
<comment type="cofactor">
    <cofactor evidence="1">
        <name>Mg(2+)</name>
        <dbReference type="ChEBI" id="CHEBI:18420"/>
    </cofactor>
</comment>
<comment type="subunit">
    <text evidence="1">Homohexamer.</text>
</comment>
<comment type="domain">
    <text evidence="1">The Walker A ATP-binding motif also binds Pi and PPi.</text>
</comment>
<comment type="miscellaneous">
    <text evidence="1">Both phosphorylation and phosphorolysis are carried out by the same active site and suggest a common mechanism for both reactions.</text>
</comment>
<comment type="similarity">
    <text evidence="1">Belongs to the HPrK/P family.</text>
</comment>
<reference key="1">
    <citation type="journal article" date="2003" name="J. Bacteriol.">
        <title>Comparative analyses of the complete genome sequences of Pierce's disease and citrus variegated chlorosis strains of Xylella fastidiosa.</title>
        <authorList>
            <person name="Van Sluys M.A."/>
            <person name="de Oliveira M.C."/>
            <person name="Monteiro-Vitorello C.B."/>
            <person name="Miyaki C.Y."/>
            <person name="Furlan L.R."/>
            <person name="Camargo L.E.A."/>
            <person name="da Silva A.C.R."/>
            <person name="Moon D.H."/>
            <person name="Takita M.A."/>
            <person name="Lemos E.G.M."/>
            <person name="Machado M.A."/>
            <person name="Ferro M.I.T."/>
            <person name="da Silva F.R."/>
            <person name="Goldman M.H.S."/>
            <person name="Goldman G.H."/>
            <person name="Lemos M.V.F."/>
            <person name="El-Dorry H."/>
            <person name="Tsai S.M."/>
            <person name="Carrer H."/>
            <person name="Carraro D.M."/>
            <person name="de Oliveira R.C."/>
            <person name="Nunes L.R."/>
            <person name="Siqueira W.J."/>
            <person name="Coutinho L.L."/>
            <person name="Kimura E.T."/>
            <person name="Ferro E.S."/>
            <person name="Harakava R."/>
            <person name="Kuramae E.E."/>
            <person name="Marino C.L."/>
            <person name="Giglioti E."/>
            <person name="Abreu I.L."/>
            <person name="Alves L.M.C."/>
            <person name="do Amaral A.M."/>
            <person name="Baia G.S."/>
            <person name="Blanco S.R."/>
            <person name="Brito M.S."/>
            <person name="Cannavan F.S."/>
            <person name="Celestino A.V."/>
            <person name="da Cunha A.F."/>
            <person name="Fenille R.C."/>
            <person name="Ferro J.A."/>
            <person name="Formighieri E.F."/>
            <person name="Kishi L.T."/>
            <person name="Leoni S.G."/>
            <person name="Oliveira A.R."/>
            <person name="Rosa V.E. Jr."/>
            <person name="Sassaki F.T."/>
            <person name="Sena J.A.D."/>
            <person name="de Souza A.A."/>
            <person name="Truffi D."/>
            <person name="Tsukumo F."/>
            <person name="Yanai G.M."/>
            <person name="Zaros L.G."/>
            <person name="Civerolo E.L."/>
            <person name="Simpson A.J.G."/>
            <person name="Almeida N.F. Jr."/>
            <person name="Setubal J.C."/>
            <person name="Kitajima J.P."/>
        </authorList>
    </citation>
    <scope>NUCLEOTIDE SEQUENCE [LARGE SCALE GENOMIC DNA]</scope>
    <source>
        <strain>Temecula1 / ATCC 700964</strain>
    </source>
</reference>
<protein>
    <recommendedName>
        <fullName evidence="1">HPr kinase/phosphorylase</fullName>
        <shortName evidence="1">HPrK/P</shortName>
        <ecNumber evidence="1">2.7.11.-</ecNumber>
        <ecNumber evidence="1">2.7.4.-</ecNumber>
    </recommendedName>
    <alternativeName>
        <fullName evidence="1">HPr(Ser) kinase/phosphorylase</fullName>
    </alternativeName>
</protein>
<gene>
    <name evidence="1" type="primary">hprK</name>
    <name type="synonym">ptsK</name>
    <name type="ordered locus">PD_0635</name>
</gene>